<name>CLC10_RAT</name>
<gene>
    <name type="primary">Clec10a</name>
    <name type="synonym">Mgl</name>
    <name type="synonym">Mgl1</name>
</gene>
<protein>
    <recommendedName>
        <fullName>C-type lectin domain family 10 member A</fullName>
    </recommendedName>
    <alternativeName>
        <fullName>MMGL</fullName>
    </alternativeName>
    <alternativeName>
        <fullName>Macrophage asialoglycoprotein-binding protein 1</fullName>
        <shortName>M-ASGP-BP-1</shortName>
    </alternativeName>
    <alternativeName>
        <fullName>Macrophage galactose/N-acetylgalactosamine-specific lectin</fullName>
    </alternativeName>
</protein>
<comment type="function">
    <text>Recognizes terminal galactose and N-acetylgalactosamine units.</text>
</comment>
<comment type="subunit">
    <text>Homooligomer.</text>
</comment>
<comment type="subcellular location">
    <subcellularLocation>
        <location>Membrane</location>
        <topology>Single-pass type II membrane protein</topology>
    </subcellularLocation>
</comment>
<feature type="chain" id="PRO_0000046658" description="C-type lectin domain family 10 member A">
    <location>
        <begin position="1"/>
        <end position="306"/>
    </location>
</feature>
<feature type="topological domain" description="Cytoplasmic" evidence="1">
    <location>
        <begin position="1"/>
        <end position="37"/>
    </location>
</feature>
<feature type="transmembrane region" description="Helical; Signal-anchor for type II membrane protein" evidence="1">
    <location>
        <begin position="38"/>
        <end position="58"/>
    </location>
</feature>
<feature type="topological domain" description="Extracellular" evidence="1">
    <location>
        <begin position="59"/>
        <end position="306"/>
    </location>
</feature>
<feature type="domain" description="C-type lectin" evidence="2">
    <location>
        <begin position="174"/>
        <end position="300"/>
    </location>
</feature>
<feature type="glycosylation site" description="N-linked (GlcNAc...) asparagine" evidence="1">
    <location>
        <position position="76"/>
    </location>
</feature>
<feature type="glycosylation site" description="N-linked (GlcNAc...) asparagine" evidence="1">
    <location>
        <position position="168"/>
    </location>
</feature>
<feature type="disulfide bond" evidence="2">
    <location>
        <begin position="175"/>
        <end position="186"/>
    </location>
</feature>
<feature type="disulfide bond" evidence="2">
    <location>
        <begin position="203"/>
        <end position="298"/>
    </location>
</feature>
<feature type="disulfide bond" evidence="2">
    <location>
        <begin position="276"/>
        <end position="290"/>
    </location>
</feature>
<dbReference type="EMBL" id="J05495">
    <property type="protein sequence ID" value="AAA41216.1"/>
    <property type="molecule type" value="mRNA"/>
</dbReference>
<dbReference type="PIR" id="A42230">
    <property type="entry name" value="A42230"/>
</dbReference>
<dbReference type="SMR" id="P49301"/>
<dbReference type="FunCoup" id="P49301">
    <property type="interactions" value="4"/>
</dbReference>
<dbReference type="STRING" id="10116.ENSRNOP00000025308"/>
<dbReference type="GlyCosmos" id="P49301">
    <property type="glycosylation" value="2 sites, No reported glycans"/>
</dbReference>
<dbReference type="GlyGen" id="P49301">
    <property type="glycosylation" value="2 sites"/>
</dbReference>
<dbReference type="PhosphoSitePlus" id="P49301"/>
<dbReference type="SwissPalm" id="P49301"/>
<dbReference type="PaxDb" id="10116-ENSRNOP00000025308"/>
<dbReference type="UCSC" id="RGD:621158">
    <property type="organism name" value="rat"/>
</dbReference>
<dbReference type="AGR" id="RGD:621158"/>
<dbReference type="RGD" id="621158">
    <property type="gene designation" value="Clec10a"/>
</dbReference>
<dbReference type="eggNOG" id="KOG4297">
    <property type="taxonomic scope" value="Eukaryota"/>
</dbReference>
<dbReference type="InParanoid" id="P49301"/>
<dbReference type="PhylomeDB" id="P49301"/>
<dbReference type="PRO" id="PR:P49301"/>
<dbReference type="Proteomes" id="UP000002494">
    <property type="component" value="Unplaced"/>
</dbReference>
<dbReference type="GO" id="GO:0009897">
    <property type="term" value="C:external side of plasma membrane"/>
    <property type="evidence" value="ECO:0000318"/>
    <property type="project" value="GO_Central"/>
</dbReference>
<dbReference type="GO" id="GO:0005537">
    <property type="term" value="F:D-mannose binding"/>
    <property type="evidence" value="ECO:0000318"/>
    <property type="project" value="GO_Central"/>
</dbReference>
<dbReference type="GO" id="GO:0042806">
    <property type="term" value="F:fucose binding"/>
    <property type="evidence" value="ECO:0000318"/>
    <property type="project" value="GO_Central"/>
</dbReference>
<dbReference type="GO" id="GO:0038187">
    <property type="term" value="F:pattern recognition receptor activity"/>
    <property type="evidence" value="ECO:0000318"/>
    <property type="project" value="GO_Central"/>
</dbReference>
<dbReference type="GO" id="GO:0002248">
    <property type="term" value="P:connective tissue replacement involved in inflammatory response wound healing"/>
    <property type="evidence" value="ECO:0000266"/>
    <property type="project" value="RGD"/>
</dbReference>
<dbReference type="GO" id="GO:0006955">
    <property type="term" value="P:immune response"/>
    <property type="evidence" value="ECO:0000318"/>
    <property type="project" value="GO_Central"/>
</dbReference>
<dbReference type="CDD" id="cd03590">
    <property type="entry name" value="CLECT_DC-SIGN_like"/>
    <property type="match status" value="1"/>
</dbReference>
<dbReference type="FunFam" id="3.10.100.10:FF:000041">
    <property type="entry name" value="Asialoglycoprotein receptor 1"/>
    <property type="match status" value="1"/>
</dbReference>
<dbReference type="Gene3D" id="1.20.5.1700">
    <property type="match status" value="1"/>
</dbReference>
<dbReference type="Gene3D" id="3.10.100.10">
    <property type="entry name" value="Mannose-Binding Protein A, subunit A"/>
    <property type="match status" value="1"/>
</dbReference>
<dbReference type="InterPro" id="IPR001304">
    <property type="entry name" value="C-type_lectin-like"/>
</dbReference>
<dbReference type="InterPro" id="IPR016186">
    <property type="entry name" value="C-type_lectin-like/link_sf"/>
</dbReference>
<dbReference type="InterPro" id="IPR050111">
    <property type="entry name" value="C-type_lectin/snaclec_domain"/>
</dbReference>
<dbReference type="InterPro" id="IPR018378">
    <property type="entry name" value="C-type_lectin_CS"/>
</dbReference>
<dbReference type="InterPro" id="IPR033989">
    <property type="entry name" value="CD209-like_CTLD"/>
</dbReference>
<dbReference type="InterPro" id="IPR016187">
    <property type="entry name" value="CTDL_fold"/>
</dbReference>
<dbReference type="PANTHER" id="PTHR22803">
    <property type="entry name" value="MANNOSE, PHOSPHOLIPASE, LECTIN RECEPTOR RELATED"/>
    <property type="match status" value="1"/>
</dbReference>
<dbReference type="Pfam" id="PF00059">
    <property type="entry name" value="Lectin_C"/>
    <property type="match status" value="1"/>
</dbReference>
<dbReference type="Pfam" id="PF03954">
    <property type="entry name" value="Lectin_N"/>
    <property type="match status" value="1"/>
</dbReference>
<dbReference type="SMART" id="SM00034">
    <property type="entry name" value="CLECT"/>
    <property type="match status" value="1"/>
</dbReference>
<dbReference type="SUPFAM" id="SSF56436">
    <property type="entry name" value="C-type lectin-like"/>
    <property type="match status" value="1"/>
</dbReference>
<dbReference type="PROSITE" id="PS00615">
    <property type="entry name" value="C_TYPE_LECTIN_1"/>
    <property type="match status" value="1"/>
</dbReference>
<dbReference type="PROSITE" id="PS50041">
    <property type="entry name" value="C_TYPE_LECTIN_2"/>
    <property type="match status" value="1"/>
</dbReference>
<sequence>MTMAYENFQNLGSEEKNQEAGKAPPQSFLCNILSWTHLLLFSLGLSLLLLVVISVIGSQNSQLRRDLETLRTTLDNTTSNTKAELQALASRGDSLQTGINSLKVEVDDHGQELQAGRGLSQKVASLESTVEKKEQTLRTDLSEITDRVQQLGKDLKTLTCQLASLKNNGSAVACCPLHWMEHEGSCYWFSQSGKPWPEADKYCQLENSNLVVVNSLAEQNFLQTHMGSVVTWIGLTDQNGPWRWVDGTDYEKGFTHWAPKQPDNWYGHGLGGGEDCAHFTSDGRWNDDVCQRPYRWVCEMKLAKDS</sequence>
<keyword id="KW-0106">Calcium</keyword>
<keyword id="KW-0903">Direct protein sequencing</keyword>
<keyword id="KW-1015">Disulfide bond</keyword>
<keyword id="KW-0325">Glycoprotein</keyword>
<keyword id="KW-0430">Lectin</keyword>
<keyword id="KW-0472">Membrane</keyword>
<keyword id="KW-1185">Reference proteome</keyword>
<keyword id="KW-0735">Signal-anchor</keyword>
<keyword id="KW-0812">Transmembrane</keyword>
<keyword id="KW-1133">Transmembrane helix</keyword>
<organism>
    <name type="scientific">Rattus norvegicus</name>
    <name type="common">Rat</name>
    <dbReference type="NCBI Taxonomy" id="10116"/>
    <lineage>
        <taxon>Eukaryota</taxon>
        <taxon>Metazoa</taxon>
        <taxon>Chordata</taxon>
        <taxon>Craniata</taxon>
        <taxon>Vertebrata</taxon>
        <taxon>Euteleostomi</taxon>
        <taxon>Mammalia</taxon>
        <taxon>Eutheria</taxon>
        <taxon>Euarchontoglires</taxon>
        <taxon>Glires</taxon>
        <taxon>Rodentia</taxon>
        <taxon>Myomorpha</taxon>
        <taxon>Muroidea</taxon>
        <taxon>Muridae</taxon>
        <taxon>Murinae</taxon>
        <taxon>Rattus</taxon>
    </lineage>
</organism>
<reference key="1">
    <citation type="journal article" date="1990" name="J. Biol. Chem.">
        <title>Molecular cloning and sequence analysis of cDNA encoding the macrophage lectin specific for galactose and N-acetylgalactosamine.</title>
        <authorList>
            <person name="Ii M."/>
            <person name="Kurata H."/>
            <person name="Itoh N."/>
            <person name="Yamashina I."/>
            <person name="Kawasaki T."/>
        </authorList>
    </citation>
    <scope>NUCLEOTIDE SEQUENCE [MRNA]</scope>
    <scope>PARTIAL PROTEIN SEQUENCE</scope>
</reference>
<reference key="2">
    <citation type="journal article" date="1988" name="Biochem. Biophys. Res. Commun.">
        <title>Structural similarity between the macrophage lectin specific for galactose/N-acetylgalactosamine and the hepatic asialoglycoprotein binding protein.</title>
        <authorList>
            <person name="Ii M."/>
            <person name="Kawasaki T."/>
            <person name="Yamashina I."/>
        </authorList>
    </citation>
    <scope>PRELIMINARY PROTEIN SEQUENCE OF 9-28</scope>
</reference>
<accession>P49301</accession>
<proteinExistence type="evidence at protein level"/>
<evidence type="ECO:0000255" key="1"/>
<evidence type="ECO:0000255" key="2">
    <source>
        <dbReference type="PROSITE-ProRule" id="PRU00040"/>
    </source>
</evidence>